<comment type="function">
    <text evidence="1">Catalyzes the attachment of valine to tRNA(Val). As ValRS can inadvertently accommodate and process structurally similar amino acids such as threonine, to avoid such errors, it has a 'posttransfer' editing activity that hydrolyzes mischarged Thr-tRNA(Val) in a tRNA-dependent manner.</text>
</comment>
<comment type="catalytic activity">
    <reaction evidence="1">
        <text>tRNA(Val) + L-valine + ATP = L-valyl-tRNA(Val) + AMP + diphosphate</text>
        <dbReference type="Rhea" id="RHEA:10704"/>
        <dbReference type="Rhea" id="RHEA-COMP:9672"/>
        <dbReference type="Rhea" id="RHEA-COMP:9708"/>
        <dbReference type="ChEBI" id="CHEBI:30616"/>
        <dbReference type="ChEBI" id="CHEBI:33019"/>
        <dbReference type="ChEBI" id="CHEBI:57762"/>
        <dbReference type="ChEBI" id="CHEBI:78442"/>
        <dbReference type="ChEBI" id="CHEBI:78537"/>
        <dbReference type="ChEBI" id="CHEBI:456215"/>
        <dbReference type="EC" id="6.1.1.9"/>
    </reaction>
</comment>
<comment type="subunit">
    <text evidence="1">Monomer.</text>
</comment>
<comment type="subcellular location">
    <subcellularLocation>
        <location evidence="1">Cytoplasm</location>
    </subcellularLocation>
</comment>
<comment type="domain">
    <text evidence="1">ValRS has two distinct active sites: one for aminoacylation and one for editing. The misactivated threonine is translocated from the active site to the editing site.</text>
</comment>
<comment type="domain">
    <text evidence="1">The C-terminal coiled-coil domain is crucial for aminoacylation activity.</text>
</comment>
<comment type="similarity">
    <text evidence="1">Belongs to the class-I aminoacyl-tRNA synthetase family. ValS type 1 subfamily.</text>
</comment>
<name>SYV_PHOLL</name>
<accession>Q7MZ25</accession>
<evidence type="ECO:0000255" key="1">
    <source>
        <dbReference type="HAMAP-Rule" id="MF_02004"/>
    </source>
</evidence>
<evidence type="ECO:0000256" key="2">
    <source>
        <dbReference type="SAM" id="MobiDB-lite"/>
    </source>
</evidence>
<reference key="1">
    <citation type="journal article" date="2003" name="Nat. Biotechnol.">
        <title>The genome sequence of the entomopathogenic bacterium Photorhabdus luminescens.</title>
        <authorList>
            <person name="Duchaud E."/>
            <person name="Rusniok C."/>
            <person name="Frangeul L."/>
            <person name="Buchrieser C."/>
            <person name="Givaudan A."/>
            <person name="Taourit S."/>
            <person name="Bocs S."/>
            <person name="Boursaux-Eude C."/>
            <person name="Chandler M."/>
            <person name="Charles J.-F."/>
            <person name="Dassa E."/>
            <person name="Derose R."/>
            <person name="Derzelle S."/>
            <person name="Freyssinet G."/>
            <person name="Gaudriault S."/>
            <person name="Medigue C."/>
            <person name="Lanois A."/>
            <person name="Powell K."/>
            <person name="Siguier P."/>
            <person name="Vincent R."/>
            <person name="Wingate V."/>
            <person name="Zouine M."/>
            <person name="Glaser P."/>
            <person name="Boemare N."/>
            <person name="Danchin A."/>
            <person name="Kunst F."/>
        </authorList>
    </citation>
    <scope>NUCLEOTIDE SEQUENCE [LARGE SCALE GENOMIC DNA]</scope>
    <source>
        <strain>DSM 15139 / CIP 105565 / TT01</strain>
    </source>
</reference>
<feature type="chain" id="PRO_0000224528" description="Valine--tRNA ligase">
    <location>
        <begin position="1"/>
        <end position="965"/>
    </location>
</feature>
<feature type="region of interest" description="Disordered" evidence="2">
    <location>
        <begin position="1"/>
        <end position="23"/>
    </location>
</feature>
<feature type="coiled-coil region" evidence="1">
    <location>
        <begin position="893"/>
        <end position="960"/>
    </location>
</feature>
<feature type="short sequence motif" description="'HIGH' region">
    <location>
        <begin position="56"/>
        <end position="66"/>
    </location>
</feature>
<feature type="short sequence motif" description="'KMSKS' region">
    <location>
        <begin position="568"/>
        <end position="572"/>
    </location>
</feature>
<feature type="compositionally biased region" description="Polar residues" evidence="2">
    <location>
        <begin position="1"/>
        <end position="12"/>
    </location>
</feature>
<feature type="binding site" evidence="1">
    <location>
        <position position="571"/>
    </location>
    <ligand>
        <name>ATP</name>
        <dbReference type="ChEBI" id="CHEBI:30616"/>
    </ligand>
</feature>
<organism>
    <name type="scientific">Photorhabdus laumondii subsp. laumondii (strain DSM 15139 / CIP 105565 / TT01)</name>
    <name type="common">Photorhabdus luminescens subsp. laumondii</name>
    <dbReference type="NCBI Taxonomy" id="243265"/>
    <lineage>
        <taxon>Bacteria</taxon>
        <taxon>Pseudomonadati</taxon>
        <taxon>Pseudomonadota</taxon>
        <taxon>Gammaproteobacteria</taxon>
        <taxon>Enterobacterales</taxon>
        <taxon>Morganellaceae</taxon>
        <taxon>Photorhabdus</taxon>
    </lineage>
</organism>
<dbReference type="EC" id="6.1.1.9" evidence="1"/>
<dbReference type="EMBL" id="BX571874">
    <property type="protein sequence ID" value="CAE16855.1"/>
    <property type="molecule type" value="Genomic_DNA"/>
</dbReference>
<dbReference type="RefSeq" id="WP_011148564.1">
    <property type="nucleotide sequence ID" value="NC_005126.1"/>
</dbReference>
<dbReference type="SMR" id="Q7MZ25"/>
<dbReference type="STRING" id="243265.plu4483"/>
<dbReference type="GeneID" id="48850689"/>
<dbReference type="KEGG" id="plu:plu4483"/>
<dbReference type="eggNOG" id="COG0525">
    <property type="taxonomic scope" value="Bacteria"/>
</dbReference>
<dbReference type="HOGENOM" id="CLU_001493_0_2_6"/>
<dbReference type="OrthoDB" id="9810365at2"/>
<dbReference type="Proteomes" id="UP000002514">
    <property type="component" value="Chromosome"/>
</dbReference>
<dbReference type="GO" id="GO:0005829">
    <property type="term" value="C:cytosol"/>
    <property type="evidence" value="ECO:0007669"/>
    <property type="project" value="TreeGrafter"/>
</dbReference>
<dbReference type="GO" id="GO:0002161">
    <property type="term" value="F:aminoacyl-tRNA deacylase activity"/>
    <property type="evidence" value="ECO:0007669"/>
    <property type="project" value="InterPro"/>
</dbReference>
<dbReference type="GO" id="GO:0005524">
    <property type="term" value="F:ATP binding"/>
    <property type="evidence" value="ECO:0007669"/>
    <property type="project" value="UniProtKB-UniRule"/>
</dbReference>
<dbReference type="GO" id="GO:0004832">
    <property type="term" value="F:valine-tRNA ligase activity"/>
    <property type="evidence" value="ECO:0007669"/>
    <property type="project" value="UniProtKB-UniRule"/>
</dbReference>
<dbReference type="GO" id="GO:0006438">
    <property type="term" value="P:valyl-tRNA aminoacylation"/>
    <property type="evidence" value="ECO:0007669"/>
    <property type="project" value="UniProtKB-UniRule"/>
</dbReference>
<dbReference type="CDD" id="cd07962">
    <property type="entry name" value="Anticodon_Ia_Val"/>
    <property type="match status" value="1"/>
</dbReference>
<dbReference type="CDD" id="cd00817">
    <property type="entry name" value="ValRS_core"/>
    <property type="match status" value="1"/>
</dbReference>
<dbReference type="FunFam" id="1.10.287.380:FF:000001">
    <property type="entry name" value="Valine--tRNA ligase"/>
    <property type="match status" value="1"/>
</dbReference>
<dbReference type="FunFam" id="1.10.730.10:FF:000007">
    <property type="entry name" value="Valine--tRNA ligase"/>
    <property type="match status" value="1"/>
</dbReference>
<dbReference type="FunFam" id="3.40.50.620:FF:000032">
    <property type="entry name" value="Valine--tRNA ligase"/>
    <property type="match status" value="1"/>
</dbReference>
<dbReference type="FunFam" id="3.40.50.620:FF:000146">
    <property type="entry name" value="Valine--tRNA ligase"/>
    <property type="match status" value="1"/>
</dbReference>
<dbReference type="FunFam" id="3.90.740.10:FF:000003">
    <property type="entry name" value="Valine--tRNA ligase"/>
    <property type="match status" value="1"/>
</dbReference>
<dbReference type="FunFam" id="3.90.740.10:FF:000004">
    <property type="entry name" value="Valine--tRNA ligase"/>
    <property type="match status" value="1"/>
</dbReference>
<dbReference type="Gene3D" id="3.40.50.620">
    <property type="entry name" value="HUPs"/>
    <property type="match status" value="2"/>
</dbReference>
<dbReference type="Gene3D" id="1.10.730.10">
    <property type="entry name" value="Isoleucyl-tRNA Synthetase, Domain 1"/>
    <property type="match status" value="1"/>
</dbReference>
<dbReference type="Gene3D" id="1.10.287.380">
    <property type="entry name" value="Valyl-tRNA synthetase, C-terminal domain"/>
    <property type="match status" value="1"/>
</dbReference>
<dbReference type="Gene3D" id="3.90.740.10">
    <property type="entry name" value="Valyl/Leucyl/Isoleucyl-tRNA synthetase, editing domain"/>
    <property type="match status" value="2"/>
</dbReference>
<dbReference type="HAMAP" id="MF_02004">
    <property type="entry name" value="Val_tRNA_synth_type1"/>
    <property type="match status" value="1"/>
</dbReference>
<dbReference type="InterPro" id="IPR001412">
    <property type="entry name" value="aa-tRNA-synth_I_CS"/>
</dbReference>
<dbReference type="InterPro" id="IPR002300">
    <property type="entry name" value="aa-tRNA-synth_Ia"/>
</dbReference>
<dbReference type="InterPro" id="IPR033705">
    <property type="entry name" value="Anticodon_Ia_Val"/>
</dbReference>
<dbReference type="InterPro" id="IPR013155">
    <property type="entry name" value="M/V/L/I-tRNA-synth_anticd-bd"/>
</dbReference>
<dbReference type="InterPro" id="IPR014729">
    <property type="entry name" value="Rossmann-like_a/b/a_fold"/>
</dbReference>
<dbReference type="InterPro" id="IPR010978">
    <property type="entry name" value="tRNA-bd_arm"/>
</dbReference>
<dbReference type="InterPro" id="IPR009080">
    <property type="entry name" value="tRNAsynth_Ia_anticodon-bd"/>
</dbReference>
<dbReference type="InterPro" id="IPR037118">
    <property type="entry name" value="Val-tRNA_synth_C_sf"/>
</dbReference>
<dbReference type="InterPro" id="IPR019499">
    <property type="entry name" value="Val-tRNA_synth_tRNA-bd"/>
</dbReference>
<dbReference type="InterPro" id="IPR009008">
    <property type="entry name" value="Val/Leu/Ile-tRNA-synth_edit"/>
</dbReference>
<dbReference type="InterPro" id="IPR002303">
    <property type="entry name" value="Valyl-tRNA_ligase"/>
</dbReference>
<dbReference type="NCBIfam" id="NF004349">
    <property type="entry name" value="PRK05729.1"/>
    <property type="match status" value="1"/>
</dbReference>
<dbReference type="NCBIfam" id="TIGR00422">
    <property type="entry name" value="valS"/>
    <property type="match status" value="1"/>
</dbReference>
<dbReference type="PANTHER" id="PTHR11946:SF93">
    <property type="entry name" value="VALINE--TRNA LIGASE, CHLOROPLASTIC_MITOCHONDRIAL 2"/>
    <property type="match status" value="1"/>
</dbReference>
<dbReference type="PANTHER" id="PTHR11946">
    <property type="entry name" value="VALYL-TRNA SYNTHETASES"/>
    <property type="match status" value="1"/>
</dbReference>
<dbReference type="Pfam" id="PF08264">
    <property type="entry name" value="Anticodon_1"/>
    <property type="match status" value="1"/>
</dbReference>
<dbReference type="Pfam" id="PF00133">
    <property type="entry name" value="tRNA-synt_1"/>
    <property type="match status" value="1"/>
</dbReference>
<dbReference type="Pfam" id="PF10458">
    <property type="entry name" value="Val_tRNA-synt_C"/>
    <property type="match status" value="1"/>
</dbReference>
<dbReference type="PRINTS" id="PR00986">
    <property type="entry name" value="TRNASYNTHVAL"/>
</dbReference>
<dbReference type="SUPFAM" id="SSF47323">
    <property type="entry name" value="Anticodon-binding domain of a subclass of class I aminoacyl-tRNA synthetases"/>
    <property type="match status" value="1"/>
</dbReference>
<dbReference type="SUPFAM" id="SSF52374">
    <property type="entry name" value="Nucleotidylyl transferase"/>
    <property type="match status" value="1"/>
</dbReference>
<dbReference type="SUPFAM" id="SSF46589">
    <property type="entry name" value="tRNA-binding arm"/>
    <property type="match status" value="1"/>
</dbReference>
<dbReference type="SUPFAM" id="SSF50677">
    <property type="entry name" value="ValRS/IleRS/LeuRS editing domain"/>
    <property type="match status" value="1"/>
</dbReference>
<dbReference type="PROSITE" id="PS00178">
    <property type="entry name" value="AA_TRNA_LIGASE_I"/>
    <property type="match status" value="1"/>
</dbReference>
<sequence length="965" mass="109990">MEKTPATQTQAEPSLDKTYNPKEIEQPLYNHWEKSGYFKPNGDTSRESFCIVIPPPNVTGSLHMGHAFQQTIMDTMIRYQRMQGKNTLWQSGTDHAGIATQMVVERKIAAEEGKTRHDYGREAFIDKIWQWKAESGGTITNQMRRLGNSVDWERERFTMDEGLSNAVKEAFVRLYQENLIYRGKRLVNWDPKLHTAISDLEVENREVKGSMWHLRYPLADGVTTAEGKDYLIVATTRPETMLGDTGVAVNPEDPRYKDLIGKEIILPLINRRIPIIGDEHADMEKGTGCVKITPAHDFNDYEVGKRHALPMINIMTFDGNIRHKAEVFDTHGEISDSYSSDIPAEYQGIERFAARKTIVAEFERLGLLVEIKAHDLTVPYGDRGGVVIEPMLTDQWYVRTAPLAKVAIEAVENGDIQFVPKQYENMYYSWMRDIQDWCISRQLWWGHRIPAWYDTNGNVYVGRSEEEVRRENNLGTDISLNQDEDVLDTWFSSGLWTFSTLGWPEQTDALKTFHPTDVLVSGFDIIFFWIARMIMMTMHFIKDENGKPQVPFKTVYMTGLIRDEEGQKMSKSKGNVIDPLDMVDGISLEELLEKRTGNMMQPQLAEKIRKRTEKQFPAGIETHGTDALRFTLAALASTGRDINWDMKRLQGYRNFCNKLWNASRFVLMNTEGQDCGQHGGEMALSLADRWILAEFNQTVKAYREALDTYRFDMAANILYEFTWNQFCDWYLELSKPAINKGSEAEVRGARHTLIEVLEGLLRLAHPIIPFITETIWQRVKIVKGIEADTIMLQPFPEFAQEKTDELALTDLEWIKEAIIAVRNIRAEMNIAPGKPLEVLLRNADAGAQRRVAENLNFIQAMGRLSSVTLLSTDEEAPISVTKLINGAEVLIPMAGLVDKEAELSRLNKEIEKLDKEIGAIEGKLSNEGFVSRAPEAVVTKERERLANCNTSKEKLLAQKETIAAL</sequence>
<proteinExistence type="inferred from homology"/>
<protein>
    <recommendedName>
        <fullName evidence="1">Valine--tRNA ligase</fullName>
        <ecNumber evidence="1">6.1.1.9</ecNumber>
    </recommendedName>
    <alternativeName>
        <fullName evidence="1">Valyl-tRNA synthetase</fullName>
        <shortName evidence="1">ValRS</shortName>
    </alternativeName>
</protein>
<gene>
    <name evidence="1" type="primary">valS</name>
    <name type="ordered locus">plu4483</name>
</gene>
<keyword id="KW-0030">Aminoacyl-tRNA synthetase</keyword>
<keyword id="KW-0067">ATP-binding</keyword>
<keyword id="KW-0175">Coiled coil</keyword>
<keyword id="KW-0963">Cytoplasm</keyword>
<keyword id="KW-0436">Ligase</keyword>
<keyword id="KW-0547">Nucleotide-binding</keyword>
<keyword id="KW-0648">Protein biosynthesis</keyword>
<keyword id="KW-1185">Reference proteome</keyword>